<name>NORW_SALEP</name>
<gene>
    <name evidence="1" type="primary">norW</name>
    <name evidence="1" type="synonym">flrR</name>
    <name type="ordered locus">SEN2682</name>
</gene>
<organism>
    <name type="scientific">Salmonella enteritidis PT4 (strain P125109)</name>
    <dbReference type="NCBI Taxonomy" id="550537"/>
    <lineage>
        <taxon>Bacteria</taxon>
        <taxon>Pseudomonadati</taxon>
        <taxon>Pseudomonadota</taxon>
        <taxon>Gammaproteobacteria</taxon>
        <taxon>Enterobacterales</taxon>
        <taxon>Enterobacteriaceae</taxon>
        <taxon>Salmonella</taxon>
    </lineage>
</organism>
<evidence type="ECO:0000255" key="1">
    <source>
        <dbReference type="HAMAP-Rule" id="MF_01313"/>
    </source>
</evidence>
<dbReference type="EC" id="1.18.1.-" evidence="1"/>
<dbReference type="EMBL" id="AM933172">
    <property type="protein sequence ID" value="CAR34261.1"/>
    <property type="molecule type" value="Genomic_DNA"/>
</dbReference>
<dbReference type="RefSeq" id="WP_000086329.1">
    <property type="nucleotide sequence ID" value="NC_011294.1"/>
</dbReference>
<dbReference type="SMR" id="B5QV90"/>
<dbReference type="KEGG" id="set:SEN2682"/>
<dbReference type="HOGENOM" id="CLU_003291_4_4_6"/>
<dbReference type="UniPathway" id="UPA00638"/>
<dbReference type="Proteomes" id="UP000000613">
    <property type="component" value="Chromosome"/>
</dbReference>
<dbReference type="GO" id="GO:0005737">
    <property type="term" value="C:cytoplasm"/>
    <property type="evidence" value="ECO:0007669"/>
    <property type="project" value="UniProtKB-SubCell"/>
</dbReference>
<dbReference type="GO" id="GO:0016731">
    <property type="term" value="F:oxidoreductase activity, acting on iron-sulfur proteins as donors, NAD or NADP as acceptor"/>
    <property type="evidence" value="ECO:0007669"/>
    <property type="project" value="UniProtKB-UniRule"/>
</dbReference>
<dbReference type="Gene3D" id="3.30.390.120">
    <property type="match status" value="1"/>
</dbReference>
<dbReference type="Gene3D" id="3.50.50.60">
    <property type="entry name" value="FAD/NAD(P)-binding domain"/>
    <property type="match status" value="2"/>
</dbReference>
<dbReference type="HAMAP" id="MF_01313">
    <property type="entry name" value="NorW"/>
    <property type="match status" value="1"/>
</dbReference>
<dbReference type="InterPro" id="IPR050260">
    <property type="entry name" value="FAD-bd_OxRdtase"/>
</dbReference>
<dbReference type="InterPro" id="IPR036188">
    <property type="entry name" value="FAD/NAD-bd_sf"/>
</dbReference>
<dbReference type="InterPro" id="IPR023753">
    <property type="entry name" value="FAD/NAD-binding_dom"/>
</dbReference>
<dbReference type="InterPro" id="IPR023961">
    <property type="entry name" value="NO_rdtase_NorW"/>
</dbReference>
<dbReference type="InterPro" id="IPR041364">
    <property type="entry name" value="Rbx-bd"/>
</dbReference>
<dbReference type="NCBIfam" id="NF003437">
    <property type="entry name" value="PRK04965.1"/>
    <property type="match status" value="1"/>
</dbReference>
<dbReference type="PANTHER" id="PTHR43429:SF3">
    <property type="entry name" value="NITRITE REDUCTASE [NAD(P)H]"/>
    <property type="match status" value="1"/>
</dbReference>
<dbReference type="PANTHER" id="PTHR43429">
    <property type="entry name" value="PYRIDINE NUCLEOTIDE-DISULFIDE OXIDOREDUCTASE DOMAIN-CONTAINING"/>
    <property type="match status" value="1"/>
</dbReference>
<dbReference type="Pfam" id="PF07992">
    <property type="entry name" value="Pyr_redox_2"/>
    <property type="match status" value="1"/>
</dbReference>
<dbReference type="Pfam" id="PF18113">
    <property type="entry name" value="Rbx_binding"/>
    <property type="match status" value="1"/>
</dbReference>
<dbReference type="PRINTS" id="PR00368">
    <property type="entry name" value="FADPNR"/>
</dbReference>
<dbReference type="PRINTS" id="PR00411">
    <property type="entry name" value="PNDRDTASEI"/>
</dbReference>
<dbReference type="SUPFAM" id="SSF51905">
    <property type="entry name" value="FAD/NAD(P)-binding domain"/>
    <property type="match status" value="1"/>
</dbReference>
<keyword id="KW-0963">Cytoplasm</keyword>
<keyword id="KW-0274">FAD</keyword>
<keyword id="KW-0285">Flavoprotein</keyword>
<keyword id="KW-0520">NAD</keyword>
<keyword id="KW-0560">Oxidoreductase</keyword>
<comment type="function">
    <text evidence="1">One of at least two accessory proteins for anaerobic nitric oxide (NO) reductase. Reduces the rubredoxin moiety of NO reductase.</text>
</comment>
<comment type="catalytic activity">
    <reaction evidence="1">
        <text>2 reduced [nitric oxide reductase rubredoxin domain] + NAD(+) + H(+) = 2 oxidized [nitric oxide reductase rubredoxin domain] + NADH</text>
        <dbReference type="Rhea" id="RHEA:42960"/>
        <dbReference type="Rhea" id="RHEA-COMP:10304"/>
        <dbReference type="Rhea" id="RHEA-COMP:10305"/>
        <dbReference type="ChEBI" id="CHEBI:15378"/>
        <dbReference type="ChEBI" id="CHEBI:29033"/>
        <dbReference type="ChEBI" id="CHEBI:29034"/>
        <dbReference type="ChEBI" id="CHEBI:57540"/>
        <dbReference type="ChEBI" id="CHEBI:57945"/>
    </reaction>
</comment>
<comment type="cofactor">
    <cofactor evidence="1">
        <name>FAD</name>
        <dbReference type="ChEBI" id="CHEBI:57692"/>
    </cofactor>
</comment>
<comment type="pathway">
    <text evidence="1">Nitrogen metabolism; nitric oxide reduction.</text>
</comment>
<comment type="subcellular location">
    <subcellularLocation>
        <location evidence="1">Cytoplasm</location>
    </subcellularLocation>
</comment>
<comment type="similarity">
    <text evidence="1">Belongs to the FAD-dependent oxidoreductase family.</text>
</comment>
<proteinExistence type="inferred from homology"/>
<reference key="1">
    <citation type="journal article" date="2008" name="Genome Res.">
        <title>Comparative genome analysis of Salmonella enteritidis PT4 and Salmonella gallinarum 287/91 provides insights into evolutionary and host adaptation pathways.</title>
        <authorList>
            <person name="Thomson N.R."/>
            <person name="Clayton D.J."/>
            <person name="Windhorst D."/>
            <person name="Vernikos G."/>
            <person name="Davidson S."/>
            <person name="Churcher C."/>
            <person name="Quail M.A."/>
            <person name="Stevens M."/>
            <person name="Jones M.A."/>
            <person name="Watson M."/>
            <person name="Barron A."/>
            <person name="Layton A."/>
            <person name="Pickard D."/>
            <person name="Kingsley R.A."/>
            <person name="Bignell A."/>
            <person name="Clark L."/>
            <person name="Harris B."/>
            <person name="Ormond D."/>
            <person name="Abdellah Z."/>
            <person name="Brooks K."/>
            <person name="Cherevach I."/>
            <person name="Chillingworth T."/>
            <person name="Woodward J."/>
            <person name="Norberczak H."/>
            <person name="Lord A."/>
            <person name="Arrowsmith C."/>
            <person name="Jagels K."/>
            <person name="Moule S."/>
            <person name="Mungall K."/>
            <person name="Saunders M."/>
            <person name="Whitehead S."/>
            <person name="Chabalgoity J.A."/>
            <person name="Maskell D."/>
            <person name="Humphreys T."/>
            <person name="Roberts M."/>
            <person name="Barrow P.A."/>
            <person name="Dougan G."/>
            <person name="Parkhill J."/>
        </authorList>
    </citation>
    <scope>NUCLEOTIDE SEQUENCE [LARGE SCALE GENOMIC DNA]</scope>
    <source>
        <strain>P125109</strain>
    </source>
</reference>
<sequence length="377" mass="41021">MSRGIIIIGSGFAARQLVKNIRKQDAHVPLTLIAADSMDEYNKPDLSHVISQSQRADDLTRQLAGEFAEQFNLRLFPHTWVADIDADAHVVKSQDKQWQYDKLVLATGAAAFVPPIAGRELMLTLNSQQEYRACETQLRDAQRVLIVGGGLIGSELAMDFCRAGKTVTLMDNAASLLASLMPPEVSSRLQHHLTDMGVHLLLKSQLQKLEKTEAGIRATLVSQHSIEVDAVIAATGLRPETALARRAGVAVNRGVCVDSYLQTSHPDIYAIGDCAEINGQVLPFLQPIQLSAMYLAKNLLGGNAPLKLPAMLVKVKTPELPLHLAGETQRSDLSWQITAESDGMIAKGMSGEGQLRAFVVSEDRMKEAFALLKTLSV</sequence>
<protein>
    <recommendedName>
        <fullName evidence="1">Nitric oxide reductase FlRd-NAD(+) reductase</fullName>
        <ecNumber evidence="1">1.18.1.-</ecNumber>
    </recommendedName>
    <alternativeName>
        <fullName evidence="1">Flavorubredoxin reductase</fullName>
        <shortName evidence="1">FlRd-reductase</shortName>
        <shortName evidence="1">FlavoRb reductase</shortName>
    </alternativeName>
</protein>
<feature type="chain" id="PRO_1000141179" description="Nitric oxide reductase FlRd-NAD(+) reductase">
    <location>
        <begin position="1"/>
        <end position="377"/>
    </location>
</feature>
<accession>B5QV90</accession>